<proteinExistence type="inferred from homology"/>
<dbReference type="EC" id="1.97.1.12" evidence="1"/>
<dbReference type="EMBL" id="AP009367">
    <property type="protein sequence ID" value="BAF49906.1"/>
    <property type="molecule type" value="Genomic_DNA"/>
</dbReference>
<dbReference type="RefSeq" id="YP_001123081.1">
    <property type="nucleotide sequence ID" value="NC_009266.1"/>
</dbReference>
<dbReference type="SMR" id="A4QJQ1"/>
<dbReference type="GeneID" id="4962320"/>
<dbReference type="GO" id="GO:0009535">
    <property type="term" value="C:chloroplast thylakoid membrane"/>
    <property type="evidence" value="ECO:0007669"/>
    <property type="project" value="UniProtKB-SubCell"/>
</dbReference>
<dbReference type="GO" id="GO:0009522">
    <property type="term" value="C:photosystem I"/>
    <property type="evidence" value="ECO:0007669"/>
    <property type="project" value="UniProtKB-KW"/>
</dbReference>
<dbReference type="GO" id="GO:0051539">
    <property type="term" value="F:4 iron, 4 sulfur cluster binding"/>
    <property type="evidence" value="ECO:0007669"/>
    <property type="project" value="UniProtKB-KW"/>
</dbReference>
<dbReference type="GO" id="GO:0009055">
    <property type="term" value="F:electron transfer activity"/>
    <property type="evidence" value="ECO:0007669"/>
    <property type="project" value="UniProtKB-UniRule"/>
</dbReference>
<dbReference type="GO" id="GO:0046872">
    <property type="term" value="F:metal ion binding"/>
    <property type="evidence" value="ECO:0007669"/>
    <property type="project" value="UniProtKB-KW"/>
</dbReference>
<dbReference type="GO" id="GO:0016491">
    <property type="term" value="F:oxidoreductase activity"/>
    <property type="evidence" value="ECO:0007669"/>
    <property type="project" value="UniProtKB-KW"/>
</dbReference>
<dbReference type="GO" id="GO:0009773">
    <property type="term" value="P:photosynthetic electron transport in photosystem I"/>
    <property type="evidence" value="ECO:0007669"/>
    <property type="project" value="InterPro"/>
</dbReference>
<dbReference type="FunFam" id="3.30.70.20:FF:000001">
    <property type="entry name" value="Photosystem I iron-sulfur center"/>
    <property type="match status" value="1"/>
</dbReference>
<dbReference type="Gene3D" id="3.30.70.20">
    <property type="match status" value="1"/>
</dbReference>
<dbReference type="HAMAP" id="MF_01303">
    <property type="entry name" value="PSI_PsaC"/>
    <property type="match status" value="1"/>
</dbReference>
<dbReference type="InterPro" id="IPR017896">
    <property type="entry name" value="4Fe4S_Fe-S-bd"/>
</dbReference>
<dbReference type="InterPro" id="IPR017900">
    <property type="entry name" value="4Fe4S_Fe_S_CS"/>
</dbReference>
<dbReference type="InterPro" id="IPR050157">
    <property type="entry name" value="PSI_iron-sulfur_center"/>
</dbReference>
<dbReference type="InterPro" id="IPR017491">
    <property type="entry name" value="PSI_PsaC"/>
</dbReference>
<dbReference type="NCBIfam" id="TIGR03048">
    <property type="entry name" value="PS_I_psaC"/>
    <property type="match status" value="1"/>
</dbReference>
<dbReference type="PANTHER" id="PTHR24960:SF79">
    <property type="entry name" value="PHOTOSYSTEM I IRON-SULFUR CENTER"/>
    <property type="match status" value="1"/>
</dbReference>
<dbReference type="PANTHER" id="PTHR24960">
    <property type="entry name" value="PHOTOSYSTEM I IRON-SULFUR CENTER-RELATED"/>
    <property type="match status" value="1"/>
</dbReference>
<dbReference type="Pfam" id="PF14697">
    <property type="entry name" value="Fer4_21"/>
    <property type="match status" value="1"/>
</dbReference>
<dbReference type="SUPFAM" id="SSF54862">
    <property type="entry name" value="4Fe-4S ferredoxins"/>
    <property type="match status" value="1"/>
</dbReference>
<dbReference type="PROSITE" id="PS00198">
    <property type="entry name" value="4FE4S_FER_1"/>
    <property type="match status" value="2"/>
</dbReference>
<dbReference type="PROSITE" id="PS51379">
    <property type="entry name" value="4FE4S_FER_2"/>
    <property type="match status" value="2"/>
</dbReference>
<geneLocation type="chloroplast"/>
<keyword id="KW-0004">4Fe-4S</keyword>
<keyword id="KW-0150">Chloroplast</keyword>
<keyword id="KW-0249">Electron transport</keyword>
<keyword id="KW-0408">Iron</keyword>
<keyword id="KW-0411">Iron-sulfur</keyword>
<keyword id="KW-0472">Membrane</keyword>
<keyword id="KW-0479">Metal-binding</keyword>
<keyword id="KW-0560">Oxidoreductase</keyword>
<keyword id="KW-0602">Photosynthesis</keyword>
<keyword id="KW-0603">Photosystem I</keyword>
<keyword id="KW-0934">Plastid</keyword>
<keyword id="KW-0677">Repeat</keyword>
<keyword id="KW-0793">Thylakoid</keyword>
<keyword id="KW-0813">Transport</keyword>
<name>PSAC_AETGR</name>
<comment type="function">
    <text evidence="1">Apoprotein for the two 4Fe-4S centers FA and FB of photosystem I (PSI); essential for photochemical activity. FB is the terminal electron acceptor of PSI, donating electrons to ferredoxin. The C-terminus interacts with PsaA/B/D and helps assemble the protein into the PSI complex. Required for binding of PsaD and PsaE to PSI. PSI is a plastocyanin-ferredoxin oxidoreductase, converting photonic excitation into a charge separation, which transfers an electron from the donor P700 chlorophyll pair to the spectroscopically characterized acceptors A0, A1, FX, FA and FB in turn.</text>
</comment>
<comment type="catalytic activity">
    <reaction evidence="1">
        <text>reduced [plastocyanin] + hnu + oxidized [2Fe-2S]-[ferredoxin] = oxidized [plastocyanin] + reduced [2Fe-2S]-[ferredoxin]</text>
        <dbReference type="Rhea" id="RHEA:30407"/>
        <dbReference type="Rhea" id="RHEA-COMP:10000"/>
        <dbReference type="Rhea" id="RHEA-COMP:10001"/>
        <dbReference type="Rhea" id="RHEA-COMP:10039"/>
        <dbReference type="Rhea" id="RHEA-COMP:10040"/>
        <dbReference type="ChEBI" id="CHEBI:29036"/>
        <dbReference type="ChEBI" id="CHEBI:30212"/>
        <dbReference type="ChEBI" id="CHEBI:33737"/>
        <dbReference type="ChEBI" id="CHEBI:33738"/>
        <dbReference type="ChEBI" id="CHEBI:49552"/>
        <dbReference type="EC" id="1.97.1.12"/>
    </reaction>
</comment>
<comment type="cofactor">
    <cofactor evidence="1">
        <name>[4Fe-4S] cluster</name>
        <dbReference type="ChEBI" id="CHEBI:49883"/>
    </cofactor>
    <text evidence="1">Binds 2 [4Fe-4S] clusters. Cluster 2 is most probably the spectroscopically characterized electron acceptor FA and cluster 1 is most probably FB.</text>
</comment>
<comment type="subunit">
    <text evidence="1">The eukaryotic PSI reaction center is composed of at least 11 subunits.</text>
</comment>
<comment type="subcellular location">
    <subcellularLocation>
        <location evidence="1">Plastid</location>
        <location evidence="1">Chloroplast thylakoid membrane</location>
        <topology evidence="1">Peripheral membrane protein</topology>
        <orientation evidence="1">Stromal side</orientation>
    </subcellularLocation>
</comment>
<protein>
    <recommendedName>
        <fullName evidence="1">Photosystem I iron-sulfur center</fullName>
        <ecNumber evidence="1">1.97.1.12</ecNumber>
    </recommendedName>
    <alternativeName>
        <fullName evidence="1">9 kDa polypeptide</fullName>
    </alternativeName>
    <alternativeName>
        <fullName evidence="1">PSI-C</fullName>
    </alternativeName>
    <alternativeName>
        <fullName evidence="1">Photosystem I subunit VII</fullName>
    </alternativeName>
    <alternativeName>
        <fullName evidence="1">PsaC</fullName>
    </alternativeName>
</protein>
<feature type="chain" id="PRO_0000292112" description="Photosystem I iron-sulfur center">
    <location>
        <begin position="1"/>
        <end position="81"/>
    </location>
</feature>
<feature type="domain" description="4Fe-4S ferredoxin-type 1" evidence="1">
    <location>
        <begin position="2"/>
        <end position="31"/>
    </location>
</feature>
<feature type="domain" description="4Fe-4S ferredoxin-type 2" evidence="1">
    <location>
        <begin position="39"/>
        <end position="68"/>
    </location>
</feature>
<feature type="binding site" evidence="1">
    <location>
        <position position="11"/>
    </location>
    <ligand>
        <name>[4Fe-4S] cluster</name>
        <dbReference type="ChEBI" id="CHEBI:49883"/>
        <label>1</label>
    </ligand>
</feature>
<feature type="binding site" evidence="1">
    <location>
        <position position="14"/>
    </location>
    <ligand>
        <name>[4Fe-4S] cluster</name>
        <dbReference type="ChEBI" id="CHEBI:49883"/>
        <label>1</label>
    </ligand>
</feature>
<feature type="binding site" evidence="1">
    <location>
        <position position="17"/>
    </location>
    <ligand>
        <name>[4Fe-4S] cluster</name>
        <dbReference type="ChEBI" id="CHEBI:49883"/>
        <label>1</label>
    </ligand>
</feature>
<feature type="binding site" evidence="1">
    <location>
        <position position="21"/>
    </location>
    <ligand>
        <name>[4Fe-4S] cluster</name>
        <dbReference type="ChEBI" id="CHEBI:49883"/>
        <label>2</label>
    </ligand>
</feature>
<feature type="binding site" evidence="1">
    <location>
        <position position="48"/>
    </location>
    <ligand>
        <name>[4Fe-4S] cluster</name>
        <dbReference type="ChEBI" id="CHEBI:49883"/>
        <label>2</label>
    </ligand>
</feature>
<feature type="binding site" evidence="1">
    <location>
        <position position="51"/>
    </location>
    <ligand>
        <name>[4Fe-4S] cluster</name>
        <dbReference type="ChEBI" id="CHEBI:49883"/>
        <label>2</label>
    </ligand>
</feature>
<feature type="binding site" evidence="1">
    <location>
        <position position="54"/>
    </location>
    <ligand>
        <name>[4Fe-4S] cluster</name>
        <dbReference type="ChEBI" id="CHEBI:49883"/>
        <label>2</label>
    </ligand>
</feature>
<feature type="binding site" evidence="1">
    <location>
        <position position="58"/>
    </location>
    <ligand>
        <name>[4Fe-4S] cluster</name>
        <dbReference type="ChEBI" id="CHEBI:49883"/>
        <label>1</label>
    </ligand>
</feature>
<sequence>MSHSVKIYDTCIGCTQCVRACPTDVLEMIPWDGCKAKQIASAPRTEDCVGCKRCESACPTDFLSVRVYLWHETTRSMGLAY</sequence>
<accession>A4QJQ1</accession>
<reference key="1">
    <citation type="submission" date="2007-03" db="EMBL/GenBank/DDBJ databases">
        <title>Sequencing analysis of Aethionema grandiflorum chloroplast DNA.</title>
        <authorList>
            <person name="Hosouchi T."/>
            <person name="Tsuruoka H."/>
            <person name="Kotani H."/>
        </authorList>
    </citation>
    <scope>NUCLEOTIDE SEQUENCE [LARGE SCALE GENOMIC DNA]</scope>
</reference>
<gene>
    <name evidence="1" type="primary">psaC</name>
</gene>
<evidence type="ECO:0000255" key="1">
    <source>
        <dbReference type="HAMAP-Rule" id="MF_01303"/>
    </source>
</evidence>
<organism>
    <name type="scientific">Aethionema grandiflorum</name>
    <name type="common">Persian stone-cress</name>
    <dbReference type="NCBI Taxonomy" id="72657"/>
    <lineage>
        <taxon>Eukaryota</taxon>
        <taxon>Viridiplantae</taxon>
        <taxon>Streptophyta</taxon>
        <taxon>Embryophyta</taxon>
        <taxon>Tracheophyta</taxon>
        <taxon>Spermatophyta</taxon>
        <taxon>Magnoliopsida</taxon>
        <taxon>eudicotyledons</taxon>
        <taxon>Gunneridae</taxon>
        <taxon>Pentapetalae</taxon>
        <taxon>rosids</taxon>
        <taxon>malvids</taxon>
        <taxon>Brassicales</taxon>
        <taxon>Brassicaceae</taxon>
        <taxon>Aethionemeae</taxon>
        <taxon>Aethionema</taxon>
    </lineage>
</organism>